<dbReference type="EC" id="4.1.2.4" evidence="1"/>
<dbReference type="EMBL" id="BA000039">
    <property type="protein sequence ID" value="BAC08632.1"/>
    <property type="molecule type" value="Genomic_DNA"/>
</dbReference>
<dbReference type="RefSeq" id="NP_681870.1">
    <property type="nucleotide sequence ID" value="NC_004113.1"/>
</dbReference>
<dbReference type="RefSeq" id="WP_011056922.1">
    <property type="nucleotide sequence ID" value="NC_004113.1"/>
</dbReference>
<dbReference type="SMR" id="Q8DJZ1"/>
<dbReference type="STRING" id="197221.gene:10747673"/>
<dbReference type="EnsemblBacteria" id="BAC08632">
    <property type="protein sequence ID" value="BAC08632"/>
    <property type="gene ID" value="BAC08632"/>
</dbReference>
<dbReference type="KEGG" id="tel:tlr1079"/>
<dbReference type="PATRIC" id="fig|197221.4.peg.1134"/>
<dbReference type="eggNOG" id="COG0274">
    <property type="taxonomic scope" value="Bacteria"/>
</dbReference>
<dbReference type="UniPathway" id="UPA00002">
    <property type="reaction ID" value="UER00468"/>
</dbReference>
<dbReference type="Proteomes" id="UP000000440">
    <property type="component" value="Chromosome"/>
</dbReference>
<dbReference type="GO" id="GO:0005737">
    <property type="term" value="C:cytoplasm"/>
    <property type="evidence" value="ECO:0007669"/>
    <property type="project" value="UniProtKB-SubCell"/>
</dbReference>
<dbReference type="GO" id="GO:0004139">
    <property type="term" value="F:deoxyribose-phosphate aldolase activity"/>
    <property type="evidence" value="ECO:0007669"/>
    <property type="project" value="UniProtKB-UniRule"/>
</dbReference>
<dbReference type="GO" id="GO:0006018">
    <property type="term" value="P:2-deoxyribose 1-phosphate catabolic process"/>
    <property type="evidence" value="ECO:0007669"/>
    <property type="project" value="UniProtKB-UniRule"/>
</dbReference>
<dbReference type="GO" id="GO:0016052">
    <property type="term" value="P:carbohydrate catabolic process"/>
    <property type="evidence" value="ECO:0007669"/>
    <property type="project" value="TreeGrafter"/>
</dbReference>
<dbReference type="GO" id="GO:0009264">
    <property type="term" value="P:deoxyribonucleotide catabolic process"/>
    <property type="evidence" value="ECO:0007669"/>
    <property type="project" value="InterPro"/>
</dbReference>
<dbReference type="CDD" id="cd00959">
    <property type="entry name" value="DeoC"/>
    <property type="match status" value="1"/>
</dbReference>
<dbReference type="FunFam" id="3.20.20.70:FF:000044">
    <property type="entry name" value="Deoxyribose-phosphate aldolase"/>
    <property type="match status" value="1"/>
</dbReference>
<dbReference type="Gene3D" id="3.20.20.70">
    <property type="entry name" value="Aldolase class I"/>
    <property type="match status" value="1"/>
</dbReference>
<dbReference type="HAMAP" id="MF_00114">
    <property type="entry name" value="DeoC_type1"/>
    <property type="match status" value="1"/>
</dbReference>
<dbReference type="InterPro" id="IPR013785">
    <property type="entry name" value="Aldolase_TIM"/>
</dbReference>
<dbReference type="InterPro" id="IPR011343">
    <property type="entry name" value="DeoC"/>
</dbReference>
<dbReference type="InterPro" id="IPR002915">
    <property type="entry name" value="DeoC/FbaB/LacD_aldolase"/>
</dbReference>
<dbReference type="InterPro" id="IPR028581">
    <property type="entry name" value="DeoC_typeI"/>
</dbReference>
<dbReference type="NCBIfam" id="TIGR00126">
    <property type="entry name" value="deoC"/>
    <property type="match status" value="1"/>
</dbReference>
<dbReference type="PANTHER" id="PTHR10889">
    <property type="entry name" value="DEOXYRIBOSE-PHOSPHATE ALDOLASE"/>
    <property type="match status" value="1"/>
</dbReference>
<dbReference type="PANTHER" id="PTHR10889:SF1">
    <property type="entry name" value="DEOXYRIBOSE-PHOSPHATE ALDOLASE"/>
    <property type="match status" value="1"/>
</dbReference>
<dbReference type="Pfam" id="PF01791">
    <property type="entry name" value="DeoC"/>
    <property type="match status" value="1"/>
</dbReference>
<dbReference type="PIRSF" id="PIRSF001357">
    <property type="entry name" value="DeoC"/>
    <property type="match status" value="1"/>
</dbReference>
<dbReference type="SMART" id="SM01133">
    <property type="entry name" value="DeoC"/>
    <property type="match status" value="1"/>
</dbReference>
<dbReference type="SUPFAM" id="SSF51569">
    <property type="entry name" value="Aldolase"/>
    <property type="match status" value="1"/>
</dbReference>
<evidence type="ECO:0000255" key="1">
    <source>
        <dbReference type="HAMAP-Rule" id="MF_00114"/>
    </source>
</evidence>
<keyword id="KW-0963">Cytoplasm</keyword>
<keyword id="KW-0456">Lyase</keyword>
<keyword id="KW-1185">Reference proteome</keyword>
<keyword id="KW-0704">Schiff base</keyword>
<comment type="function">
    <text evidence="1">Catalyzes a reversible aldol reaction between acetaldehyde and D-glyceraldehyde 3-phosphate to generate 2-deoxy-D-ribose 5-phosphate.</text>
</comment>
<comment type="catalytic activity">
    <reaction evidence="1">
        <text>2-deoxy-D-ribose 5-phosphate = D-glyceraldehyde 3-phosphate + acetaldehyde</text>
        <dbReference type="Rhea" id="RHEA:12821"/>
        <dbReference type="ChEBI" id="CHEBI:15343"/>
        <dbReference type="ChEBI" id="CHEBI:59776"/>
        <dbReference type="ChEBI" id="CHEBI:62877"/>
        <dbReference type="EC" id="4.1.2.4"/>
    </reaction>
</comment>
<comment type="pathway">
    <text evidence="1">Carbohydrate degradation; 2-deoxy-D-ribose 1-phosphate degradation; D-glyceraldehyde 3-phosphate and acetaldehyde from 2-deoxy-alpha-D-ribose 1-phosphate: step 2/2.</text>
</comment>
<comment type="subcellular location">
    <subcellularLocation>
        <location evidence="1">Cytoplasm</location>
    </subcellularLocation>
</comment>
<comment type="similarity">
    <text evidence="1">Belongs to the DeoC/FbaB aldolase family. DeoC type 1 subfamily.</text>
</comment>
<gene>
    <name evidence="1" type="primary">deoC</name>
    <name type="ordered locus">tlr1079</name>
</gene>
<name>DEOC_THEVB</name>
<organism>
    <name type="scientific">Thermosynechococcus vestitus (strain NIES-2133 / IAM M-273 / BP-1)</name>
    <dbReference type="NCBI Taxonomy" id="197221"/>
    <lineage>
        <taxon>Bacteria</taxon>
        <taxon>Bacillati</taxon>
        <taxon>Cyanobacteriota</taxon>
        <taxon>Cyanophyceae</taxon>
        <taxon>Acaryochloridales</taxon>
        <taxon>Thermosynechococcaceae</taxon>
        <taxon>Thermosynechococcus</taxon>
    </lineage>
</organism>
<feature type="chain" id="PRO_0000057278" description="Deoxyribose-phosphate aldolase">
    <location>
        <begin position="1"/>
        <end position="217"/>
    </location>
</feature>
<feature type="active site" description="Proton donor/acceptor" evidence="1">
    <location>
        <position position="95"/>
    </location>
</feature>
<feature type="active site" description="Schiff-base intermediate with acetaldehyde" evidence="1">
    <location>
        <position position="156"/>
    </location>
</feature>
<feature type="active site" description="Proton donor/acceptor" evidence="1">
    <location>
        <position position="184"/>
    </location>
</feature>
<accession>Q8DJZ1</accession>
<reference key="1">
    <citation type="journal article" date="2002" name="DNA Res.">
        <title>Complete genome structure of the thermophilic cyanobacterium Thermosynechococcus elongatus BP-1.</title>
        <authorList>
            <person name="Nakamura Y."/>
            <person name="Kaneko T."/>
            <person name="Sato S."/>
            <person name="Ikeuchi M."/>
            <person name="Katoh H."/>
            <person name="Sasamoto S."/>
            <person name="Watanabe A."/>
            <person name="Iriguchi M."/>
            <person name="Kawashima K."/>
            <person name="Kimura T."/>
            <person name="Kishida Y."/>
            <person name="Kiyokawa C."/>
            <person name="Kohara M."/>
            <person name="Matsumoto M."/>
            <person name="Matsuno A."/>
            <person name="Nakazaki N."/>
            <person name="Shimpo S."/>
            <person name="Sugimoto M."/>
            <person name="Takeuchi C."/>
            <person name="Yamada M."/>
            <person name="Tabata S."/>
        </authorList>
    </citation>
    <scope>NUCLEOTIDE SEQUENCE [LARGE SCALE GENOMIC DNA]</scope>
    <source>
        <strain>NIES-2133 / IAM M-273 / BP-1</strain>
    </source>
</reference>
<proteinExistence type="inferred from homology"/>
<sequence length="217" mass="23570">MTEHDLFDLAPYIDHTQLDPLATRADIERCCGEAEQWKFAAVCVMPVWVKTAVQLLHRTPVKVCTVIGFPSGAHTSSTKLYEAQEAVDSGATELDVVINLGWLKEGNSEAVYRDIAQICAETGVTVKAILETTVLTEEEKQLAVDICLDAGVAFLKTSTGWRGGATVADVRLLKRLSRDRVGIKASGGIRTREQALELINAGATRLGTSRSLDLMQV</sequence>
<protein>
    <recommendedName>
        <fullName evidence="1">Deoxyribose-phosphate aldolase</fullName>
        <shortName evidence="1">DERA</shortName>
        <ecNumber evidence="1">4.1.2.4</ecNumber>
    </recommendedName>
    <alternativeName>
        <fullName evidence="1">2-deoxy-D-ribose 5-phosphate aldolase</fullName>
    </alternativeName>
    <alternativeName>
        <fullName evidence="1">Phosphodeoxyriboaldolase</fullName>
        <shortName evidence="1">Deoxyriboaldolase</shortName>
    </alternativeName>
</protein>